<name>PETN_PROMA</name>
<reference key="1">
    <citation type="journal article" date="2003" name="Proc. Natl. Acad. Sci. U.S.A.">
        <title>Genome sequence of the cyanobacterium Prochlorococcus marinus SS120, a nearly minimal oxyphototrophic genome.</title>
        <authorList>
            <person name="Dufresne A."/>
            <person name="Salanoubat M."/>
            <person name="Partensky F."/>
            <person name="Artiguenave F."/>
            <person name="Axmann I.M."/>
            <person name="Barbe V."/>
            <person name="Duprat S."/>
            <person name="Galperin M.Y."/>
            <person name="Koonin E.V."/>
            <person name="Le Gall F."/>
            <person name="Makarova K.S."/>
            <person name="Ostrowski M."/>
            <person name="Oztas S."/>
            <person name="Robert C."/>
            <person name="Rogozin I.B."/>
            <person name="Scanlan D.J."/>
            <person name="Tandeau de Marsac N."/>
            <person name="Weissenbach J."/>
            <person name="Wincker P."/>
            <person name="Wolf Y.I."/>
            <person name="Hess W.R."/>
        </authorList>
    </citation>
    <scope>NUCLEOTIDE SEQUENCE [LARGE SCALE GENOMIC DNA]</scope>
    <source>
        <strain>SARG / CCMP1375 / SS120</strain>
    </source>
</reference>
<protein>
    <recommendedName>
        <fullName evidence="1">Cytochrome b6-f complex subunit 8</fullName>
    </recommendedName>
    <alternativeName>
        <fullName evidence="1">Cytochrome b6-f complex subunit PetN</fullName>
    </alternativeName>
    <alternativeName>
        <fullName evidence="1">Cytochrome b6-f complex subunit VIII</fullName>
    </alternativeName>
</protein>
<feature type="chain" id="PRO_0000217138" description="Cytochrome b6-f complex subunit 8">
    <location>
        <begin position="1"/>
        <end position="33"/>
    </location>
</feature>
<feature type="transmembrane region" description="Helical" evidence="1">
    <location>
        <begin position="2"/>
        <end position="22"/>
    </location>
</feature>
<gene>
    <name evidence="1" type="primary">petN</name>
    <name type="ordered locus">Pro_0918</name>
</gene>
<organism>
    <name type="scientific">Prochlorococcus marinus (strain SARG / CCMP1375 / SS120)</name>
    <dbReference type="NCBI Taxonomy" id="167539"/>
    <lineage>
        <taxon>Bacteria</taxon>
        <taxon>Bacillati</taxon>
        <taxon>Cyanobacteriota</taxon>
        <taxon>Cyanophyceae</taxon>
        <taxon>Synechococcales</taxon>
        <taxon>Prochlorococcaceae</taxon>
        <taxon>Prochlorococcus</taxon>
    </lineage>
</organism>
<comment type="function">
    <text evidence="1">Component of the cytochrome b6-f complex, which mediates electron transfer between photosystem II (PSII) and photosystem I (PSI), cyclic electron flow around PSI, and state transitions.</text>
</comment>
<comment type="subunit">
    <text evidence="1">The 4 large subunits of the cytochrome b6-f complex are cytochrome b6, subunit IV (17 kDa polypeptide, PetD), cytochrome f and the Rieske protein, while the 4 small subunits are PetG, PetL, PetM and PetN. The complex functions as a dimer.</text>
</comment>
<comment type="subcellular location">
    <subcellularLocation>
        <location evidence="1">Cellular thylakoid membrane</location>
        <topology evidence="1">Single-pass membrane protein</topology>
    </subcellularLocation>
</comment>
<comment type="similarity">
    <text evidence="1">Belongs to the PetN family.</text>
</comment>
<dbReference type="EMBL" id="AE017126">
    <property type="protein sequence ID" value="AAP99962.1"/>
    <property type="molecule type" value="Genomic_DNA"/>
</dbReference>
<dbReference type="RefSeq" id="NP_875310.1">
    <property type="nucleotide sequence ID" value="NC_005042.1"/>
</dbReference>
<dbReference type="RefSeq" id="WP_011125070.1">
    <property type="nucleotide sequence ID" value="NC_005042.1"/>
</dbReference>
<dbReference type="SMR" id="Q7VC24"/>
<dbReference type="STRING" id="167539.Pro_0918"/>
<dbReference type="EnsemblBacteria" id="AAP99962">
    <property type="protein sequence ID" value="AAP99962"/>
    <property type="gene ID" value="Pro_0918"/>
</dbReference>
<dbReference type="KEGG" id="pma:Pro_0918"/>
<dbReference type="PATRIC" id="fig|167539.5.peg.966"/>
<dbReference type="HOGENOM" id="CLU_215774_0_0_3"/>
<dbReference type="OrthoDB" id="560308at2"/>
<dbReference type="Proteomes" id="UP000001420">
    <property type="component" value="Chromosome"/>
</dbReference>
<dbReference type="GO" id="GO:0009512">
    <property type="term" value="C:cytochrome b6f complex"/>
    <property type="evidence" value="ECO:0007669"/>
    <property type="project" value="InterPro"/>
</dbReference>
<dbReference type="GO" id="GO:0031676">
    <property type="term" value="C:plasma membrane-derived thylakoid membrane"/>
    <property type="evidence" value="ECO:0007669"/>
    <property type="project" value="UniProtKB-SubCell"/>
</dbReference>
<dbReference type="GO" id="GO:0045158">
    <property type="term" value="F:electron transporter, transferring electrons within cytochrome b6/f complex of photosystem II activity"/>
    <property type="evidence" value="ECO:0007669"/>
    <property type="project" value="InterPro"/>
</dbReference>
<dbReference type="GO" id="GO:0017004">
    <property type="term" value="P:cytochrome complex assembly"/>
    <property type="evidence" value="ECO:0007669"/>
    <property type="project" value="UniProtKB-UniRule"/>
</dbReference>
<dbReference type="GO" id="GO:0015979">
    <property type="term" value="P:photosynthesis"/>
    <property type="evidence" value="ECO:0007669"/>
    <property type="project" value="UniProtKB-KW"/>
</dbReference>
<dbReference type="HAMAP" id="MF_00395">
    <property type="entry name" value="Cytb6_f_PetN"/>
    <property type="match status" value="1"/>
</dbReference>
<dbReference type="InterPro" id="IPR036143">
    <property type="entry name" value="Cytochr_b6-f_cplx_su8_sf"/>
</dbReference>
<dbReference type="InterPro" id="IPR005497">
    <property type="entry name" value="Cytochrome_b6-f_cplx_su8"/>
</dbReference>
<dbReference type="NCBIfam" id="NF002709">
    <property type="entry name" value="PRK02529.1"/>
    <property type="match status" value="1"/>
</dbReference>
<dbReference type="Pfam" id="PF03742">
    <property type="entry name" value="PetN"/>
    <property type="match status" value="1"/>
</dbReference>
<dbReference type="SUPFAM" id="SSF103451">
    <property type="entry name" value="PetN subunit of the cytochrome b6f complex"/>
    <property type="match status" value="1"/>
</dbReference>
<evidence type="ECO:0000255" key="1">
    <source>
        <dbReference type="HAMAP-Rule" id="MF_00395"/>
    </source>
</evidence>
<keyword id="KW-0249">Electron transport</keyword>
<keyword id="KW-0472">Membrane</keyword>
<keyword id="KW-0602">Photosynthesis</keyword>
<keyword id="KW-1185">Reference proteome</keyword>
<keyword id="KW-0793">Thylakoid</keyword>
<keyword id="KW-0812">Transmembrane</keyword>
<keyword id="KW-1133">Transmembrane helix</keyword>
<keyword id="KW-0813">Transport</keyword>
<proteinExistence type="inferred from homology"/>
<sequence length="33" mass="3623">MLFTFAWASLAAIFTFSIAMVVWGRNGDGTIDL</sequence>
<accession>Q7VC24</accession>